<comment type="function">
    <text evidence="1">GTPase that plays an essential role in the late steps of ribosome biogenesis.</text>
</comment>
<comment type="subunit">
    <text evidence="1">Associates with the 50S ribosomal subunit.</text>
</comment>
<comment type="similarity">
    <text evidence="1">Belongs to the TRAFAC class TrmE-Era-EngA-EngB-Septin-like GTPase superfamily. EngA (Der) GTPase family.</text>
</comment>
<organism>
    <name type="scientific">Xylella fastidiosa (strain 9a5c)</name>
    <dbReference type="NCBI Taxonomy" id="160492"/>
    <lineage>
        <taxon>Bacteria</taxon>
        <taxon>Pseudomonadati</taxon>
        <taxon>Pseudomonadota</taxon>
        <taxon>Gammaproteobacteria</taxon>
        <taxon>Lysobacterales</taxon>
        <taxon>Lysobacteraceae</taxon>
        <taxon>Xylella</taxon>
    </lineage>
</organism>
<accession>Q9PG37</accession>
<feature type="chain" id="PRO_0000179075" description="GTPase Der">
    <location>
        <begin position="1"/>
        <end position="465"/>
    </location>
</feature>
<feature type="domain" description="EngA-type G 1">
    <location>
        <begin position="3"/>
        <end position="167"/>
    </location>
</feature>
<feature type="domain" description="EngA-type G 2">
    <location>
        <begin position="179"/>
        <end position="352"/>
    </location>
</feature>
<feature type="domain" description="KH-like" evidence="1">
    <location>
        <begin position="353"/>
        <end position="437"/>
    </location>
</feature>
<feature type="binding site" evidence="1">
    <location>
        <begin position="9"/>
        <end position="16"/>
    </location>
    <ligand>
        <name>GTP</name>
        <dbReference type="ChEBI" id="CHEBI:37565"/>
        <label>1</label>
    </ligand>
</feature>
<feature type="binding site" evidence="1">
    <location>
        <begin position="57"/>
        <end position="61"/>
    </location>
    <ligand>
        <name>GTP</name>
        <dbReference type="ChEBI" id="CHEBI:37565"/>
        <label>1</label>
    </ligand>
</feature>
<feature type="binding site" evidence="1">
    <location>
        <begin position="119"/>
        <end position="122"/>
    </location>
    <ligand>
        <name>GTP</name>
        <dbReference type="ChEBI" id="CHEBI:37565"/>
        <label>1</label>
    </ligand>
</feature>
<feature type="binding site" evidence="1">
    <location>
        <begin position="185"/>
        <end position="192"/>
    </location>
    <ligand>
        <name>GTP</name>
        <dbReference type="ChEBI" id="CHEBI:37565"/>
        <label>2</label>
    </ligand>
</feature>
<feature type="binding site" evidence="1">
    <location>
        <begin position="232"/>
        <end position="236"/>
    </location>
    <ligand>
        <name>GTP</name>
        <dbReference type="ChEBI" id="CHEBI:37565"/>
        <label>2</label>
    </ligand>
</feature>
<feature type="binding site" evidence="1">
    <location>
        <begin position="297"/>
        <end position="300"/>
    </location>
    <ligand>
        <name>GTP</name>
        <dbReference type="ChEBI" id="CHEBI:37565"/>
        <label>2</label>
    </ligand>
</feature>
<keyword id="KW-0342">GTP-binding</keyword>
<keyword id="KW-0547">Nucleotide-binding</keyword>
<keyword id="KW-0677">Repeat</keyword>
<keyword id="KW-0690">Ribosome biogenesis</keyword>
<sequence length="465" mass="51697">MLPLVALVGRPNVGKSTLFNALTLTRDALVHDQPGVTRDRHYGVCRIDGQPLFAVVDTGGMVGKEDGLAGATARQARLAAAEADVVLFVVNVREGVSALDDDILAWLRKLSQPTLLVINKIDGVSDATVHSEFAHYGFSDVVPVSAAHRQGLDDLIEQVLAWLPERGIGEALDEDSERIHIAFVGRPNVGKSTLVNRLLGEERMIVSDVPGTTRDSITVDLERDECRYRLVDTAGLRRKSKVEEAVEKFSAFKTLQVIEQCQVAVLLLDAGEGVTDQDATVLAAILDAGKALVVAMNKWDGLGTYQREQAEDLLSRKLGFVNWAEVVRLSAKHGSGLRELFRAIHRAHVSALRQFSTSEVNKALEIAYQTAPPPSIRGHVSKLRYVHPAGSNPPTFIVHGTRLKVLPDTYKRYLENFFRKRFKLVGTPVRFLFREGDNPYEGRKNVLSERQIQRRRRLMRHVKRK</sequence>
<reference key="1">
    <citation type="journal article" date="2000" name="Nature">
        <title>The genome sequence of the plant pathogen Xylella fastidiosa.</title>
        <authorList>
            <person name="Simpson A.J.G."/>
            <person name="Reinach F.C."/>
            <person name="Arruda P."/>
            <person name="Abreu F.A."/>
            <person name="Acencio M."/>
            <person name="Alvarenga R."/>
            <person name="Alves L.M.C."/>
            <person name="Araya J.E."/>
            <person name="Baia G.S."/>
            <person name="Baptista C.S."/>
            <person name="Barros M.H."/>
            <person name="Bonaccorsi E.D."/>
            <person name="Bordin S."/>
            <person name="Bove J.M."/>
            <person name="Briones M.R.S."/>
            <person name="Bueno M.R.P."/>
            <person name="Camargo A.A."/>
            <person name="Camargo L.E.A."/>
            <person name="Carraro D.M."/>
            <person name="Carrer H."/>
            <person name="Colauto N.B."/>
            <person name="Colombo C."/>
            <person name="Costa F.F."/>
            <person name="Costa M.C.R."/>
            <person name="Costa-Neto C.M."/>
            <person name="Coutinho L.L."/>
            <person name="Cristofani M."/>
            <person name="Dias-Neto E."/>
            <person name="Docena C."/>
            <person name="El-Dorry H."/>
            <person name="Facincani A.P."/>
            <person name="Ferreira A.J.S."/>
            <person name="Ferreira V.C.A."/>
            <person name="Ferro J.A."/>
            <person name="Fraga J.S."/>
            <person name="Franca S.C."/>
            <person name="Franco M.C."/>
            <person name="Frohme M."/>
            <person name="Furlan L.R."/>
            <person name="Garnier M."/>
            <person name="Goldman G.H."/>
            <person name="Goldman M.H.S."/>
            <person name="Gomes S.L."/>
            <person name="Gruber A."/>
            <person name="Ho P.L."/>
            <person name="Hoheisel J.D."/>
            <person name="Junqueira M.L."/>
            <person name="Kemper E.L."/>
            <person name="Kitajima J.P."/>
            <person name="Krieger J.E."/>
            <person name="Kuramae E.E."/>
            <person name="Laigret F."/>
            <person name="Lambais M.R."/>
            <person name="Leite L.C.C."/>
            <person name="Lemos E.G.M."/>
            <person name="Lemos M.V.F."/>
            <person name="Lopes S.A."/>
            <person name="Lopes C.R."/>
            <person name="Machado J.A."/>
            <person name="Machado M.A."/>
            <person name="Madeira A.M.B.N."/>
            <person name="Madeira H.M.F."/>
            <person name="Marino C.L."/>
            <person name="Marques M.V."/>
            <person name="Martins E.A.L."/>
            <person name="Martins E.M.F."/>
            <person name="Matsukuma A.Y."/>
            <person name="Menck C.F.M."/>
            <person name="Miracca E.C."/>
            <person name="Miyaki C.Y."/>
            <person name="Monteiro-Vitorello C.B."/>
            <person name="Moon D.H."/>
            <person name="Nagai M.A."/>
            <person name="Nascimento A.L.T.O."/>
            <person name="Netto L.E.S."/>
            <person name="Nhani A. Jr."/>
            <person name="Nobrega F.G."/>
            <person name="Nunes L.R."/>
            <person name="Oliveira M.A."/>
            <person name="de Oliveira M.C."/>
            <person name="de Oliveira R.C."/>
            <person name="Palmieri D.A."/>
            <person name="Paris A."/>
            <person name="Peixoto B.R."/>
            <person name="Pereira G.A.G."/>
            <person name="Pereira H.A. Jr."/>
            <person name="Pesquero J.B."/>
            <person name="Quaggio R.B."/>
            <person name="Roberto P.G."/>
            <person name="Rodrigues V."/>
            <person name="de Rosa A.J.M."/>
            <person name="de Rosa V.E. Jr."/>
            <person name="de Sa R.G."/>
            <person name="Santelli R.V."/>
            <person name="Sawasaki H.E."/>
            <person name="da Silva A.C.R."/>
            <person name="da Silva A.M."/>
            <person name="da Silva F.R."/>
            <person name="Silva W.A. Jr."/>
            <person name="da Silveira J.F."/>
            <person name="Silvestri M.L.Z."/>
            <person name="Siqueira W.J."/>
            <person name="de Souza A.A."/>
            <person name="de Souza A.P."/>
            <person name="Terenzi M.F."/>
            <person name="Truffi D."/>
            <person name="Tsai S.M."/>
            <person name="Tsuhako M.H."/>
            <person name="Vallada H."/>
            <person name="Van Sluys M.A."/>
            <person name="Verjovski-Almeida S."/>
            <person name="Vettore A.L."/>
            <person name="Zago M.A."/>
            <person name="Zatz M."/>
            <person name="Meidanis J."/>
            <person name="Setubal J.C."/>
        </authorList>
    </citation>
    <scope>NUCLEOTIDE SEQUENCE [LARGE SCALE GENOMIC DNA]</scope>
    <source>
        <strain>9a5c</strain>
    </source>
</reference>
<dbReference type="EMBL" id="AE003849">
    <property type="protein sequence ID" value="AAF83275.1"/>
    <property type="molecule type" value="Genomic_DNA"/>
</dbReference>
<dbReference type="PIR" id="D82804">
    <property type="entry name" value="D82804"/>
</dbReference>
<dbReference type="RefSeq" id="WP_010892993.1">
    <property type="nucleotide sequence ID" value="NC_002488.3"/>
</dbReference>
<dbReference type="SMR" id="Q9PG37"/>
<dbReference type="STRING" id="160492.XF_0465"/>
<dbReference type="KEGG" id="xfa:XF_0465"/>
<dbReference type="eggNOG" id="COG1160">
    <property type="taxonomic scope" value="Bacteria"/>
</dbReference>
<dbReference type="HOGENOM" id="CLU_016077_6_2_6"/>
<dbReference type="Proteomes" id="UP000000812">
    <property type="component" value="Chromosome"/>
</dbReference>
<dbReference type="GO" id="GO:0016887">
    <property type="term" value="F:ATP hydrolysis activity"/>
    <property type="evidence" value="ECO:0007669"/>
    <property type="project" value="InterPro"/>
</dbReference>
<dbReference type="GO" id="GO:0005525">
    <property type="term" value="F:GTP binding"/>
    <property type="evidence" value="ECO:0007669"/>
    <property type="project" value="UniProtKB-UniRule"/>
</dbReference>
<dbReference type="GO" id="GO:0043022">
    <property type="term" value="F:ribosome binding"/>
    <property type="evidence" value="ECO:0007669"/>
    <property type="project" value="TreeGrafter"/>
</dbReference>
<dbReference type="GO" id="GO:0042254">
    <property type="term" value="P:ribosome biogenesis"/>
    <property type="evidence" value="ECO:0007669"/>
    <property type="project" value="UniProtKB-KW"/>
</dbReference>
<dbReference type="CDD" id="cd01894">
    <property type="entry name" value="EngA1"/>
    <property type="match status" value="1"/>
</dbReference>
<dbReference type="CDD" id="cd01895">
    <property type="entry name" value="EngA2"/>
    <property type="match status" value="1"/>
</dbReference>
<dbReference type="FunFam" id="3.30.300.20:FF:000004">
    <property type="entry name" value="GTPase Der"/>
    <property type="match status" value="1"/>
</dbReference>
<dbReference type="FunFam" id="3.40.50.300:FF:000040">
    <property type="entry name" value="GTPase Der"/>
    <property type="match status" value="1"/>
</dbReference>
<dbReference type="FunFam" id="3.40.50.300:FF:000057">
    <property type="entry name" value="GTPase Der"/>
    <property type="match status" value="1"/>
</dbReference>
<dbReference type="Gene3D" id="3.30.300.20">
    <property type="match status" value="1"/>
</dbReference>
<dbReference type="Gene3D" id="3.40.50.300">
    <property type="entry name" value="P-loop containing nucleotide triphosphate hydrolases"/>
    <property type="match status" value="2"/>
</dbReference>
<dbReference type="HAMAP" id="MF_00195">
    <property type="entry name" value="GTPase_Der"/>
    <property type="match status" value="1"/>
</dbReference>
<dbReference type="InterPro" id="IPR003593">
    <property type="entry name" value="AAA+_ATPase"/>
</dbReference>
<dbReference type="InterPro" id="IPR031166">
    <property type="entry name" value="G_ENGA"/>
</dbReference>
<dbReference type="InterPro" id="IPR006073">
    <property type="entry name" value="GTP-bd"/>
</dbReference>
<dbReference type="InterPro" id="IPR016484">
    <property type="entry name" value="GTPase_Der"/>
</dbReference>
<dbReference type="InterPro" id="IPR032859">
    <property type="entry name" value="KH_dom-like"/>
</dbReference>
<dbReference type="InterPro" id="IPR015946">
    <property type="entry name" value="KH_dom-like_a/b"/>
</dbReference>
<dbReference type="InterPro" id="IPR027417">
    <property type="entry name" value="P-loop_NTPase"/>
</dbReference>
<dbReference type="InterPro" id="IPR005225">
    <property type="entry name" value="Small_GTP-bd"/>
</dbReference>
<dbReference type="NCBIfam" id="TIGR03594">
    <property type="entry name" value="GTPase_EngA"/>
    <property type="match status" value="1"/>
</dbReference>
<dbReference type="NCBIfam" id="TIGR00231">
    <property type="entry name" value="small_GTP"/>
    <property type="match status" value="2"/>
</dbReference>
<dbReference type="PANTHER" id="PTHR43834">
    <property type="entry name" value="GTPASE DER"/>
    <property type="match status" value="1"/>
</dbReference>
<dbReference type="PANTHER" id="PTHR43834:SF6">
    <property type="entry name" value="GTPASE DER"/>
    <property type="match status" value="1"/>
</dbReference>
<dbReference type="Pfam" id="PF14714">
    <property type="entry name" value="KH_dom-like"/>
    <property type="match status" value="1"/>
</dbReference>
<dbReference type="Pfam" id="PF01926">
    <property type="entry name" value="MMR_HSR1"/>
    <property type="match status" value="2"/>
</dbReference>
<dbReference type="PIRSF" id="PIRSF006485">
    <property type="entry name" value="GTP-binding_EngA"/>
    <property type="match status" value="1"/>
</dbReference>
<dbReference type="PRINTS" id="PR00326">
    <property type="entry name" value="GTP1OBG"/>
</dbReference>
<dbReference type="SMART" id="SM00382">
    <property type="entry name" value="AAA"/>
    <property type="match status" value="2"/>
</dbReference>
<dbReference type="SUPFAM" id="SSF52540">
    <property type="entry name" value="P-loop containing nucleoside triphosphate hydrolases"/>
    <property type="match status" value="2"/>
</dbReference>
<dbReference type="PROSITE" id="PS51712">
    <property type="entry name" value="G_ENGA"/>
    <property type="match status" value="2"/>
</dbReference>
<proteinExistence type="inferred from homology"/>
<evidence type="ECO:0000255" key="1">
    <source>
        <dbReference type="HAMAP-Rule" id="MF_00195"/>
    </source>
</evidence>
<protein>
    <recommendedName>
        <fullName evidence="1">GTPase Der</fullName>
    </recommendedName>
    <alternativeName>
        <fullName evidence="1">GTP-binding protein EngA</fullName>
    </alternativeName>
</protein>
<name>DER_XYLFA</name>
<gene>
    <name evidence="1" type="primary">der</name>
    <name type="synonym">engA</name>
    <name type="ordered locus">XF_0465</name>
</gene>